<keyword id="KW-0238">DNA-binding</keyword>
<keyword id="KW-0240">DNA-directed RNA polymerase</keyword>
<keyword id="KW-0539">Nucleus</keyword>
<keyword id="KW-1185">Reference proteome</keyword>
<keyword id="KW-0804">Transcription</keyword>
<gene>
    <name evidence="5" type="primary">rpb-8</name>
    <name type="ORF">CBG18189</name>
</gene>
<sequence length="148" mass="17004">MAGIIFDDMFSVKSVDPDGKKFDRVSRYFCDAESFKMELIIDINSQIYPLKQNDKFRLVLATTLREDGLADEGEYDPKAEYPRIKQYEYVMYGKVYRLEDDDSGTDGGQLAAYASFGGLLMRLKGEAINLHGFEVDMNLYLLMKKTDF</sequence>
<accession>A8XT81</accession>
<comment type="function">
    <text evidence="2">DNA-dependent RNA polymerase catalyzes the transcription of DNA into RNA using the four ribonucleoside triphosphates as substrates. Common component of RNA polymerases I, II and III which synthesize ribosomal RNA precursors, mRNA precursors and many functional non-coding RNAs, and small RNAs, such as 5S rRNA and tRNAs, respectively (By similarity).</text>
</comment>
<comment type="subunit">
    <text evidence="1">Component of the RNA polymerase I (Pol I), RNA polymerase II (Pol II) and RNA polymerase III (Pol III) complexes consisting of at least 13, 12 and 17 subunits, respectively. Directly interacts with POLR2A (By similarity).</text>
</comment>
<comment type="subcellular location">
    <subcellularLocation>
        <location evidence="2">Nucleus</location>
    </subcellularLocation>
</comment>
<comment type="similarity">
    <text evidence="4">Belongs to the eukaryotic RPB8 RNA polymerase subunit family.</text>
</comment>
<dbReference type="EMBL" id="HE600936">
    <property type="protein sequence ID" value="CAP35684.1"/>
    <property type="molecule type" value="Genomic_DNA"/>
</dbReference>
<dbReference type="SMR" id="A8XT81"/>
<dbReference type="FunCoup" id="A8XT81">
    <property type="interactions" value="2451"/>
</dbReference>
<dbReference type="STRING" id="6238.A8XT81"/>
<dbReference type="EnsemblMetazoa" id="CBG18189.1">
    <property type="protein sequence ID" value="CBG18189.1"/>
    <property type="gene ID" value="WBGene00037654"/>
</dbReference>
<dbReference type="KEGG" id="cbr:CBG_18189"/>
<dbReference type="CTD" id="8584211"/>
<dbReference type="WormBase" id="CBG18189">
    <property type="protein sequence ID" value="CBP19241"/>
    <property type="gene ID" value="WBGene00037654"/>
    <property type="gene designation" value="Cbr-rpb-8"/>
</dbReference>
<dbReference type="eggNOG" id="KOG3400">
    <property type="taxonomic scope" value="Eukaryota"/>
</dbReference>
<dbReference type="HOGENOM" id="CLU_103864_1_1_1"/>
<dbReference type="InParanoid" id="A8XT81"/>
<dbReference type="OMA" id="IKQYEYV"/>
<dbReference type="OrthoDB" id="10249565at2759"/>
<dbReference type="Proteomes" id="UP000008549">
    <property type="component" value="Unassembled WGS sequence"/>
</dbReference>
<dbReference type="GO" id="GO:0005736">
    <property type="term" value="C:RNA polymerase I complex"/>
    <property type="evidence" value="ECO:0000318"/>
    <property type="project" value="GO_Central"/>
</dbReference>
<dbReference type="GO" id="GO:0005665">
    <property type="term" value="C:RNA polymerase II, core complex"/>
    <property type="evidence" value="ECO:0000318"/>
    <property type="project" value="GO_Central"/>
</dbReference>
<dbReference type="GO" id="GO:0005666">
    <property type="term" value="C:RNA polymerase III complex"/>
    <property type="evidence" value="ECO:0000318"/>
    <property type="project" value="GO_Central"/>
</dbReference>
<dbReference type="GO" id="GO:0003677">
    <property type="term" value="F:DNA binding"/>
    <property type="evidence" value="ECO:0007669"/>
    <property type="project" value="UniProtKB-KW"/>
</dbReference>
<dbReference type="GO" id="GO:0003899">
    <property type="term" value="F:DNA-directed RNA polymerase activity"/>
    <property type="evidence" value="ECO:0007669"/>
    <property type="project" value="InterPro"/>
</dbReference>
<dbReference type="GO" id="GO:0006351">
    <property type="term" value="P:DNA-templated transcription"/>
    <property type="evidence" value="ECO:0007669"/>
    <property type="project" value="InterPro"/>
</dbReference>
<dbReference type="FunFam" id="2.40.50.140:FF:000073">
    <property type="entry name" value="DNA-directed RNA polymerases I, II, and III subunit RPABC3"/>
    <property type="match status" value="1"/>
</dbReference>
<dbReference type="Gene3D" id="2.40.50.140">
    <property type="entry name" value="Nucleic acid-binding proteins"/>
    <property type="match status" value="1"/>
</dbReference>
<dbReference type="InterPro" id="IPR012340">
    <property type="entry name" value="NA-bd_OB-fold"/>
</dbReference>
<dbReference type="InterPro" id="IPR005570">
    <property type="entry name" value="RPABC3"/>
</dbReference>
<dbReference type="PANTHER" id="PTHR10917">
    <property type="entry name" value="DNA-DIRECTED RNA POLYMERASES I, II, AND III SUBUNIT RPABC3"/>
    <property type="match status" value="1"/>
</dbReference>
<dbReference type="PANTHER" id="PTHR10917:SF0">
    <property type="entry name" value="DNA-DIRECTED RNA POLYMERASES I, II, AND III SUBUNIT RPABC3"/>
    <property type="match status" value="1"/>
</dbReference>
<dbReference type="Pfam" id="PF03870">
    <property type="entry name" value="RNA_pol_Rpb8"/>
    <property type="match status" value="1"/>
</dbReference>
<dbReference type="PIRSF" id="PIRSF000779">
    <property type="entry name" value="RNA_pol_Rpb8"/>
    <property type="match status" value="1"/>
</dbReference>
<dbReference type="SMART" id="SM00658">
    <property type="entry name" value="RPOL8c"/>
    <property type="match status" value="1"/>
</dbReference>
<dbReference type="SUPFAM" id="SSF50249">
    <property type="entry name" value="Nucleic acid-binding proteins"/>
    <property type="match status" value="1"/>
</dbReference>
<reference evidence="5" key="1">
    <citation type="journal article" date="2003" name="PLoS Biol.">
        <title>The genome sequence of Caenorhabditis briggsae: a platform for comparative genomics.</title>
        <authorList>
            <person name="Stein L.D."/>
            <person name="Bao Z."/>
            <person name="Blasiar D."/>
            <person name="Blumenthal T."/>
            <person name="Brent M.R."/>
            <person name="Chen N."/>
            <person name="Chinwalla A."/>
            <person name="Clarke L."/>
            <person name="Clee C."/>
            <person name="Coghlan A."/>
            <person name="Coulson A."/>
            <person name="D'Eustachio P."/>
            <person name="Fitch D.H.A."/>
            <person name="Fulton L.A."/>
            <person name="Fulton R.E."/>
            <person name="Griffiths-Jones S."/>
            <person name="Harris T.W."/>
            <person name="Hillier L.W."/>
            <person name="Kamath R."/>
            <person name="Kuwabara P.E."/>
            <person name="Mardis E.R."/>
            <person name="Marra M.A."/>
            <person name="Miner T.L."/>
            <person name="Minx P."/>
            <person name="Mullikin J.C."/>
            <person name="Plumb R.W."/>
            <person name="Rogers J."/>
            <person name="Schein J.E."/>
            <person name="Sohrmann M."/>
            <person name="Spieth J."/>
            <person name="Stajich J.E."/>
            <person name="Wei C."/>
            <person name="Willey D."/>
            <person name="Wilson R.K."/>
            <person name="Durbin R.M."/>
            <person name="Waterston R.H."/>
        </authorList>
    </citation>
    <scope>NUCLEOTIDE SEQUENCE [LARGE SCALE GENOMIC DNA]</scope>
    <source>
        <strain evidence="5">AF16</strain>
    </source>
</reference>
<name>RPAB3_CAEBR</name>
<protein>
    <recommendedName>
        <fullName evidence="3">Probable DNA-directed RNA polymerases I, II, and III subunit RPABC3</fullName>
        <shortName evidence="3">RNA polymerases I, II, and III subunit ABC3</shortName>
    </recommendedName>
    <alternativeName>
        <fullName>RNA polymerase B subunit 8</fullName>
        <shortName>RPB8</shortName>
    </alternativeName>
</protein>
<organism>
    <name type="scientific">Caenorhabditis briggsae</name>
    <dbReference type="NCBI Taxonomy" id="6238"/>
    <lineage>
        <taxon>Eukaryota</taxon>
        <taxon>Metazoa</taxon>
        <taxon>Ecdysozoa</taxon>
        <taxon>Nematoda</taxon>
        <taxon>Chromadorea</taxon>
        <taxon>Rhabditida</taxon>
        <taxon>Rhabditina</taxon>
        <taxon>Rhabditomorpha</taxon>
        <taxon>Rhabditoidea</taxon>
        <taxon>Rhabditidae</taxon>
        <taxon>Peloderinae</taxon>
        <taxon>Caenorhabditis</taxon>
    </lineage>
</organism>
<feature type="chain" id="PRO_0000365632" description="Probable DNA-directed RNA polymerases I, II, and III subunit RPABC3">
    <location>
        <begin position="1"/>
        <end position="148"/>
    </location>
</feature>
<feature type="region of interest" description="Non-specific ssDNA binding" evidence="1">
    <location>
        <begin position="16"/>
        <end position="40"/>
    </location>
</feature>
<proteinExistence type="inferred from homology"/>
<evidence type="ECO:0000250" key="1"/>
<evidence type="ECO:0000250" key="2">
    <source>
        <dbReference type="UniProtKB" id="P52434"/>
    </source>
</evidence>
<evidence type="ECO:0000250" key="3">
    <source>
        <dbReference type="UniProtKB" id="Q19826"/>
    </source>
</evidence>
<evidence type="ECO:0000255" key="4"/>
<evidence type="ECO:0000312" key="5">
    <source>
        <dbReference type="EMBL" id="CAP35684.1"/>
    </source>
</evidence>